<protein>
    <recommendedName>
        <fullName evidence="1">UvrABC system protein B</fullName>
        <shortName evidence="1">Protein UvrB</shortName>
    </recommendedName>
    <alternativeName>
        <fullName evidence="1">Excinuclease ABC subunit B</fullName>
    </alternativeName>
</protein>
<sequence>MSKPFKLNSAFKPSGDQPDAIRRLEEGLEDGLAHQTLLGVTGSGKTFTIANVIADLQRPTMVLAPNKTLAAQLYGEMKEFFPENAVEYFVSYYDYYQPEAYVPSSDTFIEKDASVNEHIEQMRLSATKALLERRDVVVVASVSAIYGLGDPDLYLKMMLHLTVGMLIDQRAILRRLAELQYTRNDQAFQRGTFRVRGEVIDIFPAESDDIALRVELFDEEVERLSLFDPLTGQVESTVPRYTIYPKTHYVTPRERILQAMEEIKDELADRRKVLLANNKLLEEQRLSQRTQFDLEMMNELGYCSGIENYSRFLSGRGPGEPPPTLFDYLPADGLLVVDESHVTIPQIGGMYRGDRARKETLVEYGFRLPSALDNRPLKFEEFEALAPQTIYVSATPGNYELEKSGDEVVDQVVRPTGLLDPIIEVRPVATQVDDLLSEIRQRAAINERVLVTTLTKRMAEDLTEYLEEHGERVRYLHSDIDTVERMEIIRDLRLGEFDVLVGINLLREGLDMPEVSLVAILDADKEGFLRSERSLIQTIGRAARNVNGKAILYGDKITPSMAKAIGETERRREKQQKYNEEHGITPQGLNKKVVDILALGQNIAKTKAKGKGKGRSTAKAGIVELDMTPKALQQKIHELEGQMMQHAQNLEFEEAAQIRDQLHQLRELFIAAS</sequence>
<evidence type="ECO:0000255" key="1">
    <source>
        <dbReference type="HAMAP-Rule" id="MF_00204"/>
    </source>
</evidence>
<reference key="1">
    <citation type="journal article" date="2008" name="Genome Res.">
        <title>Comparative genome analysis of Salmonella enteritidis PT4 and Salmonella gallinarum 287/91 provides insights into evolutionary and host adaptation pathways.</title>
        <authorList>
            <person name="Thomson N.R."/>
            <person name="Clayton D.J."/>
            <person name="Windhorst D."/>
            <person name="Vernikos G."/>
            <person name="Davidson S."/>
            <person name="Churcher C."/>
            <person name="Quail M.A."/>
            <person name="Stevens M."/>
            <person name="Jones M.A."/>
            <person name="Watson M."/>
            <person name="Barron A."/>
            <person name="Layton A."/>
            <person name="Pickard D."/>
            <person name="Kingsley R.A."/>
            <person name="Bignell A."/>
            <person name="Clark L."/>
            <person name="Harris B."/>
            <person name="Ormond D."/>
            <person name="Abdellah Z."/>
            <person name="Brooks K."/>
            <person name="Cherevach I."/>
            <person name="Chillingworth T."/>
            <person name="Woodward J."/>
            <person name="Norberczak H."/>
            <person name="Lord A."/>
            <person name="Arrowsmith C."/>
            <person name="Jagels K."/>
            <person name="Moule S."/>
            <person name="Mungall K."/>
            <person name="Saunders M."/>
            <person name="Whitehead S."/>
            <person name="Chabalgoity J.A."/>
            <person name="Maskell D."/>
            <person name="Humphreys T."/>
            <person name="Roberts M."/>
            <person name="Barrow P.A."/>
            <person name="Dougan G."/>
            <person name="Parkhill J."/>
        </authorList>
    </citation>
    <scope>NUCLEOTIDE SEQUENCE [LARGE SCALE GENOMIC DNA]</scope>
    <source>
        <strain>P125109</strain>
    </source>
</reference>
<organism>
    <name type="scientific">Salmonella enteritidis PT4 (strain P125109)</name>
    <dbReference type="NCBI Taxonomy" id="550537"/>
    <lineage>
        <taxon>Bacteria</taxon>
        <taxon>Pseudomonadati</taxon>
        <taxon>Pseudomonadota</taxon>
        <taxon>Gammaproteobacteria</taxon>
        <taxon>Enterobacterales</taxon>
        <taxon>Enterobacteriaceae</taxon>
        <taxon>Salmonella</taxon>
    </lineage>
</organism>
<name>UVRB_SALEP</name>
<gene>
    <name evidence="1" type="primary">uvrB</name>
    <name type="ordered locus">SEN0744</name>
</gene>
<proteinExistence type="inferred from homology"/>
<comment type="function">
    <text evidence="1">The UvrABC repair system catalyzes the recognition and processing of DNA lesions. A damage recognition complex composed of 2 UvrA and 2 UvrB subunits scans DNA for abnormalities. Upon binding of the UvrA(2)B(2) complex to a putative damaged site, the DNA wraps around one UvrB monomer. DNA wrap is dependent on ATP binding by UvrB and probably causes local melting of the DNA helix, facilitating insertion of UvrB beta-hairpin between the DNA strands. Then UvrB probes one DNA strand for the presence of a lesion. If a lesion is found the UvrA subunits dissociate and the UvrB-DNA preincision complex is formed. This complex is subsequently bound by UvrC and the second UvrB is released. If no lesion is found, the DNA wraps around the other UvrB subunit that will check the other stand for damage.</text>
</comment>
<comment type="subunit">
    <text evidence="1">Forms a heterotetramer with UvrA during the search for lesions. Interacts with UvrC in an incision complex.</text>
</comment>
<comment type="subcellular location">
    <subcellularLocation>
        <location evidence="1">Cytoplasm</location>
    </subcellularLocation>
</comment>
<comment type="domain">
    <text evidence="1">The beta-hairpin motif is involved in DNA binding.</text>
</comment>
<comment type="similarity">
    <text evidence="1">Belongs to the UvrB family.</text>
</comment>
<keyword id="KW-0067">ATP-binding</keyword>
<keyword id="KW-0963">Cytoplasm</keyword>
<keyword id="KW-0227">DNA damage</keyword>
<keyword id="KW-0228">DNA excision</keyword>
<keyword id="KW-0234">DNA repair</keyword>
<keyword id="KW-0267">Excision nuclease</keyword>
<keyword id="KW-0347">Helicase</keyword>
<keyword id="KW-0378">Hydrolase</keyword>
<keyword id="KW-0547">Nucleotide-binding</keyword>
<keyword id="KW-0742">SOS response</keyword>
<dbReference type="EMBL" id="AM933172">
    <property type="protein sequence ID" value="CAR32329.1"/>
    <property type="molecule type" value="Genomic_DNA"/>
</dbReference>
<dbReference type="RefSeq" id="WP_000042502.1">
    <property type="nucleotide sequence ID" value="NC_011294.1"/>
</dbReference>
<dbReference type="SMR" id="B5QX69"/>
<dbReference type="KEGG" id="set:SEN0744"/>
<dbReference type="HOGENOM" id="CLU_009621_2_1_6"/>
<dbReference type="Proteomes" id="UP000000613">
    <property type="component" value="Chromosome"/>
</dbReference>
<dbReference type="GO" id="GO:0005737">
    <property type="term" value="C:cytoplasm"/>
    <property type="evidence" value="ECO:0007669"/>
    <property type="project" value="UniProtKB-SubCell"/>
</dbReference>
<dbReference type="GO" id="GO:0009380">
    <property type="term" value="C:excinuclease repair complex"/>
    <property type="evidence" value="ECO:0007669"/>
    <property type="project" value="InterPro"/>
</dbReference>
<dbReference type="GO" id="GO:0005524">
    <property type="term" value="F:ATP binding"/>
    <property type="evidence" value="ECO:0007669"/>
    <property type="project" value="UniProtKB-UniRule"/>
</dbReference>
<dbReference type="GO" id="GO:0016887">
    <property type="term" value="F:ATP hydrolysis activity"/>
    <property type="evidence" value="ECO:0007669"/>
    <property type="project" value="InterPro"/>
</dbReference>
<dbReference type="GO" id="GO:0003677">
    <property type="term" value="F:DNA binding"/>
    <property type="evidence" value="ECO:0007669"/>
    <property type="project" value="UniProtKB-UniRule"/>
</dbReference>
<dbReference type="GO" id="GO:0009381">
    <property type="term" value="F:excinuclease ABC activity"/>
    <property type="evidence" value="ECO:0007669"/>
    <property type="project" value="UniProtKB-UniRule"/>
</dbReference>
<dbReference type="GO" id="GO:0004386">
    <property type="term" value="F:helicase activity"/>
    <property type="evidence" value="ECO:0007669"/>
    <property type="project" value="UniProtKB-KW"/>
</dbReference>
<dbReference type="GO" id="GO:0006289">
    <property type="term" value="P:nucleotide-excision repair"/>
    <property type="evidence" value="ECO:0007669"/>
    <property type="project" value="UniProtKB-UniRule"/>
</dbReference>
<dbReference type="GO" id="GO:0009432">
    <property type="term" value="P:SOS response"/>
    <property type="evidence" value="ECO:0007669"/>
    <property type="project" value="UniProtKB-UniRule"/>
</dbReference>
<dbReference type="CDD" id="cd17916">
    <property type="entry name" value="DEXHc_UvrB"/>
    <property type="match status" value="1"/>
</dbReference>
<dbReference type="CDD" id="cd18790">
    <property type="entry name" value="SF2_C_UvrB"/>
    <property type="match status" value="1"/>
</dbReference>
<dbReference type="FunFam" id="3.40.50.300:FF:000257">
    <property type="entry name" value="UvrABC system protein B"/>
    <property type="match status" value="1"/>
</dbReference>
<dbReference type="FunFam" id="3.40.50.300:FF:000401">
    <property type="entry name" value="UvrABC system protein B"/>
    <property type="match status" value="1"/>
</dbReference>
<dbReference type="FunFam" id="3.40.50.300:FF:000477">
    <property type="entry name" value="UvrABC system protein B"/>
    <property type="match status" value="1"/>
</dbReference>
<dbReference type="Gene3D" id="6.10.140.240">
    <property type="match status" value="1"/>
</dbReference>
<dbReference type="Gene3D" id="3.40.50.300">
    <property type="entry name" value="P-loop containing nucleotide triphosphate hydrolases"/>
    <property type="match status" value="3"/>
</dbReference>
<dbReference type="Gene3D" id="4.10.860.10">
    <property type="entry name" value="UVR domain"/>
    <property type="match status" value="1"/>
</dbReference>
<dbReference type="HAMAP" id="MF_00204">
    <property type="entry name" value="UvrB"/>
    <property type="match status" value="1"/>
</dbReference>
<dbReference type="InterPro" id="IPR006935">
    <property type="entry name" value="Helicase/UvrB_N"/>
</dbReference>
<dbReference type="InterPro" id="IPR014001">
    <property type="entry name" value="Helicase_ATP-bd"/>
</dbReference>
<dbReference type="InterPro" id="IPR001650">
    <property type="entry name" value="Helicase_C-like"/>
</dbReference>
<dbReference type="InterPro" id="IPR027417">
    <property type="entry name" value="P-loop_NTPase"/>
</dbReference>
<dbReference type="InterPro" id="IPR001943">
    <property type="entry name" value="UVR_dom"/>
</dbReference>
<dbReference type="InterPro" id="IPR036876">
    <property type="entry name" value="UVR_dom_sf"/>
</dbReference>
<dbReference type="InterPro" id="IPR004807">
    <property type="entry name" value="UvrB"/>
</dbReference>
<dbReference type="InterPro" id="IPR041471">
    <property type="entry name" value="UvrB_inter"/>
</dbReference>
<dbReference type="InterPro" id="IPR024759">
    <property type="entry name" value="UvrB_YAD/RRR_dom"/>
</dbReference>
<dbReference type="NCBIfam" id="NF003673">
    <property type="entry name" value="PRK05298.1"/>
    <property type="match status" value="1"/>
</dbReference>
<dbReference type="NCBIfam" id="TIGR00631">
    <property type="entry name" value="uvrb"/>
    <property type="match status" value="1"/>
</dbReference>
<dbReference type="PANTHER" id="PTHR24029">
    <property type="entry name" value="UVRABC SYSTEM PROTEIN B"/>
    <property type="match status" value="1"/>
</dbReference>
<dbReference type="PANTHER" id="PTHR24029:SF0">
    <property type="entry name" value="UVRABC SYSTEM PROTEIN B"/>
    <property type="match status" value="1"/>
</dbReference>
<dbReference type="Pfam" id="PF00271">
    <property type="entry name" value="Helicase_C"/>
    <property type="match status" value="1"/>
</dbReference>
<dbReference type="Pfam" id="PF04851">
    <property type="entry name" value="ResIII"/>
    <property type="match status" value="1"/>
</dbReference>
<dbReference type="Pfam" id="PF02151">
    <property type="entry name" value="UVR"/>
    <property type="match status" value="1"/>
</dbReference>
<dbReference type="Pfam" id="PF12344">
    <property type="entry name" value="UvrB"/>
    <property type="match status" value="1"/>
</dbReference>
<dbReference type="Pfam" id="PF17757">
    <property type="entry name" value="UvrB_inter"/>
    <property type="match status" value="1"/>
</dbReference>
<dbReference type="SMART" id="SM00487">
    <property type="entry name" value="DEXDc"/>
    <property type="match status" value="1"/>
</dbReference>
<dbReference type="SMART" id="SM00490">
    <property type="entry name" value="HELICc"/>
    <property type="match status" value="1"/>
</dbReference>
<dbReference type="SUPFAM" id="SSF46600">
    <property type="entry name" value="C-terminal UvrC-binding domain of UvrB"/>
    <property type="match status" value="1"/>
</dbReference>
<dbReference type="SUPFAM" id="SSF52540">
    <property type="entry name" value="P-loop containing nucleoside triphosphate hydrolases"/>
    <property type="match status" value="2"/>
</dbReference>
<dbReference type="PROSITE" id="PS51192">
    <property type="entry name" value="HELICASE_ATP_BIND_1"/>
    <property type="match status" value="1"/>
</dbReference>
<dbReference type="PROSITE" id="PS51194">
    <property type="entry name" value="HELICASE_CTER"/>
    <property type="match status" value="1"/>
</dbReference>
<dbReference type="PROSITE" id="PS50151">
    <property type="entry name" value="UVR"/>
    <property type="match status" value="1"/>
</dbReference>
<feature type="chain" id="PRO_1000099562" description="UvrABC system protein B">
    <location>
        <begin position="1"/>
        <end position="673"/>
    </location>
</feature>
<feature type="domain" description="Helicase ATP-binding" evidence="1">
    <location>
        <begin position="26"/>
        <end position="183"/>
    </location>
</feature>
<feature type="domain" description="Helicase C-terminal" evidence="1">
    <location>
        <begin position="431"/>
        <end position="597"/>
    </location>
</feature>
<feature type="domain" description="UVR" evidence="1">
    <location>
        <begin position="633"/>
        <end position="668"/>
    </location>
</feature>
<feature type="short sequence motif" description="Beta-hairpin">
    <location>
        <begin position="92"/>
        <end position="115"/>
    </location>
</feature>
<feature type="binding site" evidence="1">
    <location>
        <begin position="39"/>
        <end position="46"/>
    </location>
    <ligand>
        <name>ATP</name>
        <dbReference type="ChEBI" id="CHEBI:30616"/>
    </ligand>
</feature>
<accession>B5QX69</accession>